<keyword id="KW-0456">Lyase</keyword>
<keyword id="KW-0659">Purine metabolism</keyword>
<keyword id="KW-1185">Reference proteome</keyword>
<protein>
    <recommendedName>
        <fullName evidence="1">Ureidoglycolate lyase</fullName>
        <ecNumber evidence="1">4.3.2.3</ecNumber>
    </recommendedName>
    <alternativeName>
        <fullName evidence="1">Ureidoglycolatase</fullName>
    </alternativeName>
</protein>
<dbReference type="EC" id="4.3.2.3" evidence="1"/>
<dbReference type="EMBL" id="CU928161">
    <property type="protein sequence ID" value="CAR01850.1"/>
    <property type="molecule type" value="Genomic_DNA"/>
</dbReference>
<dbReference type="RefSeq" id="WP_000776372.1">
    <property type="nucleotide sequence ID" value="NC_011742.1"/>
</dbReference>
<dbReference type="SMR" id="B7ME28"/>
<dbReference type="KEGG" id="ecz:ECS88_0504"/>
<dbReference type="HOGENOM" id="CLU_070848_1_1_6"/>
<dbReference type="UniPathway" id="UPA00395"/>
<dbReference type="Proteomes" id="UP000000747">
    <property type="component" value="Chromosome"/>
</dbReference>
<dbReference type="GO" id="GO:0004848">
    <property type="term" value="F:ureidoglycolate hydrolase activity"/>
    <property type="evidence" value="ECO:0007669"/>
    <property type="project" value="InterPro"/>
</dbReference>
<dbReference type="GO" id="GO:0050385">
    <property type="term" value="F:ureidoglycolate lyase activity"/>
    <property type="evidence" value="ECO:0007669"/>
    <property type="project" value="UniProtKB-UniRule"/>
</dbReference>
<dbReference type="GO" id="GO:0000256">
    <property type="term" value="P:allantoin catabolic process"/>
    <property type="evidence" value="ECO:0007669"/>
    <property type="project" value="UniProtKB-UniRule"/>
</dbReference>
<dbReference type="GO" id="GO:0006145">
    <property type="term" value="P:purine nucleobase catabolic process"/>
    <property type="evidence" value="ECO:0007669"/>
    <property type="project" value="UniProtKB-UniRule"/>
</dbReference>
<dbReference type="CDD" id="cd20298">
    <property type="entry name" value="cupin_UAH"/>
    <property type="match status" value="1"/>
</dbReference>
<dbReference type="FunFam" id="2.60.120.480:FF:000001">
    <property type="entry name" value="Ureidoglycolate lyase"/>
    <property type="match status" value="1"/>
</dbReference>
<dbReference type="Gene3D" id="2.60.120.480">
    <property type="entry name" value="Ureidoglycolate hydrolase"/>
    <property type="match status" value="1"/>
</dbReference>
<dbReference type="HAMAP" id="MF_00616">
    <property type="entry name" value="Ureidogly_lyase"/>
    <property type="match status" value="1"/>
</dbReference>
<dbReference type="InterPro" id="IPR011051">
    <property type="entry name" value="RmlC_Cupin_sf"/>
</dbReference>
<dbReference type="InterPro" id="IPR047233">
    <property type="entry name" value="UAH_cupin"/>
</dbReference>
<dbReference type="InterPro" id="IPR007247">
    <property type="entry name" value="Ureidogly_lyase"/>
</dbReference>
<dbReference type="InterPro" id="IPR023525">
    <property type="entry name" value="Ureidogly_lyase_bac"/>
</dbReference>
<dbReference type="InterPro" id="IPR024060">
    <property type="entry name" value="Ureidoglycolate_lyase_dom_sf"/>
</dbReference>
<dbReference type="NCBIfam" id="NF002948">
    <property type="entry name" value="PRK03606.1-1"/>
    <property type="match status" value="1"/>
</dbReference>
<dbReference type="NCBIfam" id="NF009932">
    <property type="entry name" value="PRK13395.1"/>
    <property type="match status" value="1"/>
</dbReference>
<dbReference type="PANTHER" id="PTHR21221">
    <property type="entry name" value="UREIDOGLYCOLATE HYDROLASE"/>
    <property type="match status" value="1"/>
</dbReference>
<dbReference type="PANTHER" id="PTHR21221:SF1">
    <property type="entry name" value="UREIDOGLYCOLATE LYASE"/>
    <property type="match status" value="1"/>
</dbReference>
<dbReference type="Pfam" id="PF04115">
    <property type="entry name" value="Ureidogly_lyase"/>
    <property type="match status" value="1"/>
</dbReference>
<dbReference type="PIRSF" id="PIRSF017306">
    <property type="entry name" value="Ureidogly_hydro"/>
    <property type="match status" value="1"/>
</dbReference>
<dbReference type="SUPFAM" id="SSF51182">
    <property type="entry name" value="RmlC-like cupins"/>
    <property type="match status" value="1"/>
</dbReference>
<sequence>MKLQVLPLSQEAFSAYGDVIETQKRDFFHINNGLVERYHDLALVEILEQDRTLISINRAQPANLPLTIHELERHPLGTQAFIPMKGEVFVVVVALGDDKPDLSTLRAFITNGEQGVNYHRNVWHHPLFAWQRVTDFLTIDRGGSDNCDVESIPEQELCFA</sequence>
<gene>
    <name evidence="1" type="primary">allA</name>
    <name type="ordered locus">ECS88_0504</name>
</gene>
<evidence type="ECO:0000255" key="1">
    <source>
        <dbReference type="HAMAP-Rule" id="MF_00616"/>
    </source>
</evidence>
<comment type="function">
    <text evidence="1">Catalyzes the catabolism of the allantoin degradation intermediate (S)-ureidoglycolate, generating urea and glyoxylate. Involved in the anaerobic utilization of allantoin as sole nitrogen source. Reinforces the induction of genes involved in the degradation of allantoin and glyoxylate by producing glyoxylate.</text>
</comment>
<comment type="catalytic activity">
    <reaction evidence="1">
        <text>(S)-ureidoglycolate = urea + glyoxylate</text>
        <dbReference type="Rhea" id="RHEA:11304"/>
        <dbReference type="ChEBI" id="CHEBI:16199"/>
        <dbReference type="ChEBI" id="CHEBI:36655"/>
        <dbReference type="ChEBI" id="CHEBI:57296"/>
        <dbReference type="EC" id="4.3.2.3"/>
    </reaction>
</comment>
<comment type="cofactor">
    <cofactor evidence="1">
        <name>Ni(2+)</name>
        <dbReference type="ChEBI" id="CHEBI:49786"/>
    </cofactor>
</comment>
<comment type="pathway">
    <text evidence="1">Nitrogen metabolism; (S)-allantoin degradation.</text>
</comment>
<comment type="subunit">
    <text evidence="1">Homodimer.</text>
</comment>
<comment type="similarity">
    <text evidence="1">Belongs to the ureidoglycolate lyase family.</text>
</comment>
<accession>B7ME28</accession>
<organism>
    <name type="scientific">Escherichia coli O45:K1 (strain S88 / ExPEC)</name>
    <dbReference type="NCBI Taxonomy" id="585035"/>
    <lineage>
        <taxon>Bacteria</taxon>
        <taxon>Pseudomonadati</taxon>
        <taxon>Pseudomonadota</taxon>
        <taxon>Gammaproteobacteria</taxon>
        <taxon>Enterobacterales</taxon>
        <taxon>Enterobacteriaceae</taxon>
        <taxon>Escherichia</taxon>
    </lineage>
</organism>
<reference key="1">
    <citation type="journal article" date="2009" name="PLoS Genet.">
        <title>Organised genome dynamics in the Escherichia coli species results in highly diverse adaptive paths.</title>
        <authorList>
            <person name="Touchon M."/>
            <person name="Hoede C."/>
            <person name="Tenaillon O."/>
            <person name="Barbe V."/>
            <person name="Baeriswyl S."/>
            <person name="Bidet P."/>
            <person name="Bingen E."/>
            <person name="Bonacorsi S."/>
            <person name="Bouchier C."/>
            <person name="Bouvet O."/>
            <person name="Calteau A."/>
            <person name="Chiapello H."/>
            <person name="Clermont O."/>
            <person name="Cruveiller S."/>
            <person name="Danchin A."/>
            <person name="Diard M."/>
            <person name="Dossat C."/>
            <person name="Karoui M.E."/>
            <person name="Frapy E."/>
            <person name="Garry L."/>
            <person name="Ghigo J.M."/>
            <person name="Gilles A.M."/>
            <person name="Johnson J."/>
            <person name="Le Bouguenec C."/>
            <person name="Lescat M."/>
            <person name="Mangenot S."/>
            <person name="Martinez-Jehanne V."/>
            <person name="Matic I."/>
            <person name="Nassif X."/>
            <person name="Oztas S."/>
            <person name="Petit M.A."/>
            <person name="Pichon C."/>
            <person name="Rouy Z."/>
            <person name="Ruf C.S."/>
            <person name="Schneider D."/>
            <person name="Tourret J."/>
            <person name="Vacherie B."/>
            <person name="Vallenet D."/>
            <person name="Medigue C."/>
            <person name="Rocha E.P.C."/>
            <person name="Denamur E."/>
        </authorList>
    </citation>
    <scope>NUCLEOTIDE SEQUENCE [LARGE SCALE GENOMIC DNA]</scope>
    <source>
        <strain>S88 / ExPEC</strain>
    </source>
</reference>
<feature type="chain" id="PRO_1000130411" description="Ureidoglycolate lyase">
    <location>
        <begin position="1"/>
        <end position="160"/>
    </location>
</feature>
<name>ALLA_ECO45</name>
<proteinExistence type="inferred from homology"/>